<evidence type="ECO:0000255" key="1">
    <source>
        <dbReference type="HAMAP-Rule" id="MF_01897"/>
    </source>
</evidence>
<evidence type="ECO:0000255" key="2">
    <source>
        <dbReference type="PROSITE-ProRule" id="PRU01384"/>
    </source>
</evidence>
<comment type="function">
    <text evidence="1">A type II topoisomerase that negatively supercoils closed circular double-stranded (ds) DNA in an ATP-dependent manner to modulate DNA topology and maintain chromosomes in an underwound state. Negative supercoiling favors strand separation, and DNA replication, transcription, recombination and repair, all of which involve strand separation. Also able to catalyze the interconversion of other topological isomers of dsDNA rings, including catenanes and knotted rings. Type II topoisomerases break and join 2 DNA strands simultaneously in an ATP-dependent manner.</text>
</comment>
<comment type="catalytic activity">
    <reaction evidence="1">
        <text>ATP-dependent breakage, passage and rejoining of double-stranded DNA.</text>
        <dbReference type="EC" id="5.6.2.2"/>
    </reaction>
</comment>
<comment type="subunit">
    <text evidence="1">Heterotetramer, composed of two GyrA and two GyrB chains. In the heterotetramer, GyrA contains the active site tyrosine that forms a transient covalent intermediate with DNA, while GyrB binds cofactors and catalyzes ATP hydrolysis.</text>
</comment>
<comment type="subcellular location">
    <subcellularLocation>
        <location evidence="1">Cytoplasm</location>
    </subcellularLocation>
</comment>
<comment type="miscellaneous">
    <text evidence="1">Few gyrases are as efficient as E.coli at forming negative supercoils. Not all organisms have 2 type II topoisomerases; in organisms with a single type II topoisomerase this enzyme also has to decatenate newly replicated chromosomes.</text>
</comment>
<comment type="similarity">
    <text evidence="1">Belongs to the type II topoisomerase GyrA/ParC subunit family.</text>
</comment>
<reference key="1">
    <citation type="journal article" date="1998" name="Science">
        <title>Genome sequence of an obligate intracellular pathogen of humans: Chlamydia trachomatis.</title>
        <authorList>
            <person name="Stephens R.S."/>
            <person name="Kalman S."/>
            <person name="Lammel C.J."/>
            <person name="Fan J."/>
            <person name="Marathe R."/>
            <person name="Aravind L."/>
            <person name="Mitchell W.P."/>
            <person name="Olinger L."/>
            <person name="Tatusov R.L."/>
            <person name="Zhao Q."/>
            <person name="Koonin E.V."/>
            <person name="Davis R.W."/>
        </authorList>
    </citation>
    <scope>NUCLEOTIDE SEQUENCE [LARGE SCALE GENOMIC DNA]</scope>
    <source>
        <strain>ATCC VR-885 / DSM 19411 / UW-3/Cx</strain>
    </source>
</reference>
<reference key="2">
    <citation type="submission" date="1998-01" db="EMBL/GenBank/DDBJ databases">
        <title>Sequencing of gyrase and topoisomerase IV QRDRs of Chlamydia trachomatis and characterization of quinolone-resistant mutants obtained in vitro.</title>
        <authorList>
            <person name="Dessus-Babus S."/>
            <person name="Bebear C.M."/>
            <person name="Charron A."/>
            <person name="Bebear C."/>
            <person name="de Barbeyrac B."/>
        </authorList>
    </citation>
    <scope>NUCLEOTIDE SEQUENCE [GENOMIC DNA] OF 1-179</scope>
    <source>
        <strain>L2</strain>
    </source>
</reference>
<protein>
    <recommendedName>
        <fullName evidence="1">DNA gyrase subunit A</fullName>
        <ecNumber evidence="1">5.6.2.2</ecNumber>
    </recommendedName>
</protein>
<dbReference type="EC" id="5.6.2.2" evidence="1"/>
<dbReference type="EMBL" id="AE001273">
    <property type="protein sequence ID" value="AAC67781.1"/>
    <property type="molecule type" value="Genomic_DNA"/>
</dbReference>
<dbReference type="EMBL" id="AF044267">
    <property type="protein sequence ID" value="AAC33552.1"/>
    <property type="molecule type" value="Genomic_DNA"/>
</dbReference>
<dbReference type="PIR" id="F71546">
    <property type="entry name" value="F71546"/>
</dbReference>
<dbReference type="RefSeq" id="WP_009871535.1">
    <property type="nucleotide sequence ID" value="NC_000117.1"/>
</dbReference>
<dbReference type="SMR" id="O84192"/>
<dbReference type="FunCoup" id="O84192">
    <property type="interactions" value="249"/>
</dbReference>
<dbReference type="STRING" id="272561.CT_189"/>
<dbReference type="EnsemblBacteria" id="AAC67781">
    <property type="protein sequence ID" value="AAC67781"/>
    <property type="gene ID" value="CT_189"/>
</dbReference>
<dbReference type="KEGG" id="ctr:CT_189"/>
<dbReference type="PATRIC" id="fig|272561.5.peg.203"/>
<dbReference type="HOGENOM" id="CLU_002977_6_1_0"/>
<dbReference type="InParanoid" id="O84192"/>
<dbReference type="OrthoDB" id="9806486at2"/>
<dbReference type="Proteomes" id="UP000000431">
    <property type="component" value="Chromosome"/>
</dbReference>
<dbReference type="GO" id="GO:0005694">
    <property type="term" value="C:chromosome"/>
    <property type="evidence" value="ECO:0007669"/>
    <property type="project" value="InterPro"/>
</dbReference>
<dbReference type="GO" id="GO:0005737">
    <property type="term" value="C:cytoplasm"/>
    <property type="evidence" value="ECO:0000318"/>
    <property type="project" value="GO_Central"/>
</dbReference>
<dbReference type="GO" id="GO:0009330">
    <property type="term" value="C:DNA topoisomerase type II (double strand cut, ATP-hydrolyzing) complex"/>
    <property type="evidence" value="ECO:0000318"/>
    <property type="project" value="GO_Central"/>
</dbReference>
<dbReference type="GO" id="GO:0005524">
    <property type="term" value="F:ATP binding"/>
    <property type="evidence" value="ECO:0000318"/>
    <property type="project" value="GO_Central"/>
</dbReference>
<dbReference type="GO" id="GO:0003677">
    <property type="term" value="F:DNA binding"/>
    <property type="evidence" value="ECO:0000318"/>
    <property type="project" value="GO_Central"/>
</dbReference>
<dbReference type="GO" id="GO:0034335">
    <property type="term" value="F:DNA negative supercoiling activity"/>
    <property type="evidence" value="ECO:0007669"/>
    <property type="project" value="UniProtKB-ARBA"/>
</dbReference>
<dbReference type="GO" id="GO:0006265">
    <property type="term" value="P:DNA topological change"/>
    <property type="evidence" value="ECO:0000318"/>
    <property type="project" value="GO_Central"/>
</dbReference>
<dbReference type="GO" id="GO:0006261">
    <property type="term" value="P:DNA-templated DNA replication"/>
    <property type="evidence" value="ECO:0007669"/>
    <property type="project" value="UniProtKB-UniRule"/>
</dbReference>
<dbReference type="CDD" id="cd00187">
    <property type="entry name" value="TOP4c"/>
    <property type="match status" value="1"/>
</dbReference>
<dbReference type="FunFam" id="1.10.268.10:FF:000001">
    <property type="entry name" value="DNA gyrase subunit A"/>
    <property type="match status" value="1"/>
</dbReference>
<dbReference type="FunFam" id="3.30.1360.40:FF:000002">
    <property type="entry name" value="DNA gyrase subunit A"/>
    <property type="match status" value="1"/>
</dbReference>
<dbReference type="FunFam" id="2.120.10.90:FF:000005">
    <property type="entry name" value="DNA topoisomerase 4 subunit A"/>
    <property type="match status" value="1"/>
</dbReference>
<dbReference type="Gene3D" id="3.30.1360.40">
    <property type="match status" value="1"/>
</dbReference>
<dbReference type="Gene3D" id="2.120.10.90">
    <property type="entry name" value="DNA gyrase/topoisomerase IV, subunit A, C-terminal"/>
    <property type="match status" value="1"/>
</dbReference>
<dbReference type="Gene3D" id="3.90.199.10">
    <property type="entry name" value="Topoisomerase II, domain 5"/>
    <property type="match status" value="1"/>
</dbReference>
<dbReference type="Gene3D" id="1.10.268.10">
    <property type="entry name" value="Topoisomerase, domain 3"/>
    <property type="match status" value="1"/>
</dbReference>
<dbReference type="HAMAP" id="MF_01897">
    <property type="entry name" value="GyrA"/>
    <property type="match status" value="1"/>
</dbReference>
<dbReference type="InterPro" id="IPR005743">
    <property type="entry name" value="GyrA"/>
</dbReference>
<dbReference type="InterPro" id="IPR006691">
    <property type="entry name" value="GyrA/parC_rep"/>
</dbReference>
<dbReference type="InterPro" id="IPR035516">
    <property type="entry name" value="Gyrase/topoIV_suA_C"/>
</dbReference>
<dbReference type="InterPro" id="IPR013760">
    <property type="entry name" value="Topo_IIA-like_dom_sf"/>
</dbReference>
<dbReference type="InterPro" id="IPR013758">
    <property type="entry name" value="Topo_IIA_A/C_ab"/>
</dbReference>
<dbReference type="InterPro" id="IPR013757">
    <property type="entry name" value="Topo_IIA_A_a_sf"/>
</dbReference>
<dbReference type="InterPro" id="IPR002205">
    <property type="entry name" value="Topo_IIA_dom_A"/>
</dbReference>
<dbReference type="InterPro" id="IPR050220">
    <property type="entry name" value="Type_II_DNA_Topoisomerases"/>
</dbReference>
<dbReference type="NCBIfam" id="TIGR01063">
    <property type="entry name" value="gyrA"/>
    <property type="match status" value="1"/>
</dbReference>
<dbReference type="NCBIfam" id="NF004043">
    <property type="entry name" value="PRK05560.1"/>
    <property type="match status" value="1"/>
</dbReference>
<dbReference type="NCBIfam" id="NF004044">
    <property type="entry name" value="PRK05561.1"/>
    <property type="match status" value="1"/>
</dbReference>
<dbReference type="PANTHER" id="PTHR43493:SF5">
    <property type="entry name" value="DNA GYRASE SUBUNIT A, CHLOROPLASTIC_MITOCHONDRIAL"/>
    <property type="match status" value="1"/>
</dbReference>
<dbReference type="PANTHER" id="PTHR43493">
    <property type="entry name" value="DNA GYRASE/TOPOISOMERASE SUBUNIT A"/>
    <property type="match status" value="1"/>
</dbReference>
<dbReference type="Pfam" id="PF03989">
    <property type="entry name" value="DNA_gyraseA_C"/>
    <property type="match status" value="6"/>
</dbReference>
<dbReference type="Pfam" id="PF00521">
    <property type="entry name" value="DNA_topoisoIV"/>
    <property type="match status" value="1"/>
</dbReference>
<dbReference type="SMART" id="SM00434">
    <property type="entry name" value="TOP4c"/>
    <property type="match status" value="1"/>
</dbReference>
<dbReference type="SUPFAM" id="SSF101904">
    <property type="entry name" value="GyrA/ParC C-terminal domain-like"/>
    <property type="match status" value="1"/>
</dbReference>
<dbReference type="SUPFAM" id="SSF56719">
    <property type="entry name" value="Type II DNA topoisomerase"/>
    <property type="match status" value="1"/>
</dbReference>
<dbReference type="PROSITE" id="PS52040">
    <property type="entry name" value="TOPO_IIA"/>
    <property type="match status" value="1"/>
</dbReference>
<gene>
    <name evidence="1" type="primary">gyrA</name>
    <name type="ordered locus">CT_189</name>
</gene>
<organism>
    <name type="scientific">Chlamydia trachomatis serovar D (strain ATCC VR-885 / DSM 19411 / UW-3/Cx)</name>
    <dbReference type="NCBI Taxonomy" id="272561"/>
    <lineage>
        <taxon>Bacteria</taxon>
        <taxon>Pseudomonadati</taxon>
        <taxon>Chlamydiota</taxon>
        <taxon>Chlamydiia</taxon>
        <taxon>Chlamydiales</taxon>
        <taxon>Chlamydiaceae</taxon>
        <taxon>Chlamydia/Chlamydophila group</taxon>
        <taxon>Chlamydia</taxon>
    </lineage>
</organism>
<accession>O84192</accession>
<proteinExistence type="inferred from homology"/>
<feature type="chain" id="PRO_0000145230" description="DNA gyrase subunit A">
    <location>
        <begin position="1"/>
        <end position="836"/>
    </location>
</feature>
<feature type="domain" description="Topo IIA-type catalytic" evidence="2">
    <location>
        <begin position="34"/>
        <end position="500"/>
    </location>
</feature>
<feature type="short sequence motif" description="GyrA-box" evidence="1">
    <location>
        <begin position="527"/>
        <end position="533"/>
    </location>
</feature>
<feature type="active site" description="O-(5'-phospho-DNA)-tyrosine intermediate" evidence="1">
    <location>
        <position position="122"/>
    </location>
</feature>
<name>GYRA_CHLTR</name>
<keyword id="KW-0067">ATP-binding</keyword>
<keyword id="KW-0963">Cytoplasm</keyword>
<keyword id="KW-0238">DNA-binding</keyword>
<keyword id="KW-0413">Isomerase</keyword>
<keyword id="KW-0547">Nucleotide-binding</keyword>
<keyword id="KW-1185">Reference proteome</keyword>
<keyword id="KW-0799">Topoisomerase</keyword>
<sequence>MLNKEEIIVPKNLEEEMKESYLRYSMSVIISRALPDARDGLKPSQRRILYAMKQLNLTPGVKHRKCAKICGDTSGDYHPHGESVIYPTLVRMAQDWAMRYPLVDGQGNFGSIDGDPAAAMRYTEARLTHSAIFLLEDLDKDTVDMVPNYDETKYEPVVFPSKFPNLLCNGSSGIAVGMATNIPPHNLGELIEATLLVLANSQTSIEDILEVMPGPDFPTGGIICGTEGIRSTYYTGRGKLRLRARMHVEENSDKQRENIILTEMPYNVNKSRLIEQIAELINEKTLTGISDVRDESDKDGIRVVLELKKGESSEVVINRLYKFTDVQVTFGANMLALDKNLPRTMNIHRMISAWIRHRMDVIQRRTRYELNKAEARAHILEGFLKALSCMDEVVKTIRESSNKEHAKQQLVELFSFSEAQALAILELRLYQLTGLEADKVQKEYSELLEKITYYRKVLAEEELVKDIIREELQELHKVHKTPRRTRIEMDAGDVRDIEDIISDESVIITISGDDYVKRMPVKVFREQKRGGQGVTGFDMKKGSDFLKAVYSASTKDYLLIFTNFGQCYWLKVWRLPEGERRAKGKPIINFLEGIRPGEQVAAVLNVKRFEQGEYLFLATKKGVVKKVSLDAFGSPRKKGIRALEIDDGDELIAARHIANDEEKVMLFTRLGMAVRFPHDKVRPMGRAARGVRGVSLKNEQDFVVSCQVVTEDQSVLVVCDNGFGKRSLVCDFRETNRGSVGVRSIVINQRNGDVLGAISVTDCDSILLMSAQGQAIRINMQDVRVMGRATQGVRLVNLREGDTLVAMEKLSINTESVETEENLAASVQSGQDTIEE</sequence>